<organism>
    <name type="scientific">Lactobacillus johnsonii (strain CNCM I-12250 / La1 / NCC 533)</name>
    <dbReference type="NCBI Taxonomy" id="257314"/>
    <lineage>
        <taxon>Bacteria</taxon>
        <taxon>Bacillati</taxon>
        <taxon>Bacillota</taxon>
        <taxon>Bacilli</taxon>
        <taxon>Lactobacillales</taxon>
        <taxon>Lactobacillaceae</taxon>
        <taxon>Lactobacillus</taxon>
    </lineage>
</organism>
<sequence>MAIDFKEHIASVQDFPNKGIVFRDITPILQDGKLYRAATHELADYAKSRGAEVIVGPEARGFIVGCPVATELGVGFVPARKPHKLPREVESASYDLEYGSNVLEMHKDAIKPGQKVVICDDLMATAGTLHATKELIENLGGEVVGAAFYIELTDLKGREQFPDLDIYSLVKYSDA</sequence>
<dbReference type="EC" id="2.4.2.7" evidence="1"/>
<dbReference type="EMBL" id="AE017198">
    <property type="protein sequence ID" value="AAS09242.1"/>
    <property type="molecule type" value="Genomic_DNA"/>
</dbReference>
<dbReference type="RefSeq" id="WP_004897152.1">
    <property type="nucleotide sequence ID" value="NC_005362.1"/>
</dbReference>
<dbReference type="SMR" id="Q74IU0"/>
<dbReference type="KEGG" id="ljo:LJ_1474"/>
<dbReference type="eggNOG" id="COG0503">
    <property type="taxonomic scope" value="Bacteria"/>
</dbReference>
<dbReference type="HOGENOM" id="CLU_063339_3_0_9"/>
<dbReference type="UniPathway" id="UPA00588">
    <property type="reaction ID" value="UER00646"/>
</dbReference>
<dbReference type="Proteomes" id="UP000000581">
    <property type="component" value="Chromosome"/>
</dbReference>
<dbReference type="GO" id="GO:0005737">
    <property type="term" value="C:cytoplasm"/>
    <property type="evidence" value="ECO:0007669"/>
    <property type="project" value="UniProtKB-SubCell"/>
</dbReference>
<dbReference type="GO" id="GO:0002055">
    <property type="term" value="F:adenine binding"/>
    <property type="evidence" value="ECO:0007669"/>
    <property type="project" value="TreeGrafter"/>
</dbReference>
<dbReference type="GO" id="GO:0003999">
    <property type="term" value="F:adenine phosphoribosyltransferase activity"/>
    <property type="evidence" value="ECO:0007669"/>
    <property type="project" value="UniProtKB-UniRule"/>
</dbReference>
<dbReference type="GO" id="GO:0016208">
    <property type="term" value="F:AMP binding"/>
    <property type="evidence" value="ECO:0007669"/>
    <property type="project" value="TreeGrafter"/>
</dbReference>
<dbReference type="GO" id="GO:0006168">
    <property type="term" value="P:adenine salvage"/>
    <property type="evidence" value="ECO:0007669"/>
    <property type="project" value="InterPro"/>
</dbReference>
<dbReference type="GO" id="GO:0044209">
    <property type="term" value="P:AMP salvage"/>
    <property type="evidence" value="ECO:0007669"/>
    <property type="project" value="UniProtKB-UniRule"/>
</dbReference>
<dbReference type="GO" id="GO:0006166">
    <property type="term" value="P:purine ribonucleoside salvage"/>
    <property type="evidence" value="ECO:0007669"/>
    <property type="project" value="UniProtKB-KW"/>
</dbReference>
<dbReference type="CDD" id="cd06223">
    <property type="entry name" value="PRTases_typeI"/>
    <property type="match status" value="1"/>
</dbReference>
<dbReference type="FunFam" id="3.40.50.2020:FF:000004">
    <property type="entry name" value="Adenine phosphoribosyltransferase"/>
    <property type="match status" value="1"/>
</dbReference>
<dbReference type="Gene3D" id="3.40.50.2020">
    <property type="match status" value="1"/>
</dbReference>
<dbReference type="HAMAP" id="MF_00004">
    <property type="entry name" value="Aden_phosphoribosyltr"/>
    <property type="match status" value="1"/>
</dbReference>
<dbReference type="InterPro" id="IPR005764">
    <property type="entry name" value="Ade_phspho_trans"/>
</dbReference>
<dbReference type="InterPro" id="IPR000836">
    <property type="entry name" value="PRibTrfase_dom"/>
</dbReference>
<dbReference type="InterPro" id="IPR029057">
    <property type="entry name" value="PRTase-like"/>
</dbReference>
<dbReference type="InterPro" id="IPR050054">
    <property type="entry name" value="UPRTase/APRTase"/>
</dbReference>
<dbReference type="NCBIfam" id="TIGR01090">
    <property type="entry name" value="apt"/>
    <property type="match status" value="1"/>
</dbReference>
<dbReference type="NCBIfam" id="NF002633">
    <property type="entry name" value="PRK02304.1-2"/>
    <property type="match status" value="1"/>
</dbReference>
<dbReference type="NCBIfam" id="NF002634">
    <property type="entry name" value="PRK02304.1-3"/>
    <property type="match status" value="1"/>
</dbReference>
<dbReference type="NCBIfam" id="NF002636">
    <property type="entry name" value="PRK02304.1-5"/>
    <property type="match status" value="1"/>
</dbReference>
<dbReference type="PANTHER" id="PTHR32315">
    <property type="entry name" value="ADENINE PHOSPHORIBOSYLTRANSFERASE"/>
    <property type="match status" value="1"/>
</dbReference>
<dbReference type="PANTHER" id="PTHR32315:SF3">
    <property type="entry name" value="ADENINE PHOSPHORIBOSYLTRANSFERASE"/>
    <property type="match status" value="1"/>
</dbReference>
<dbReference type="Pfam" id="PF00156">
    <property type="entry name" value="Pribosyltran"/>
    <property type="match status" value="1"/>
</dbReference>
<dbReference type="SUPFAM" id="SSF53271">
    <property type="entry name" value="PRTase-like"/>
    <property type="match status" value="1"/>
</dbReference>
<dbReference type="PROSITE" id="PS00103">
    <property type="entry name" value="PUR_PYR_PR_TRANSFER"/>
    <property type="match status" value="1"/>
</dbReference>
<protein>
    <recommendedName>
        <fullName evidence="1">Adenine phosphoribosyltransferase</fullName>
        <shortName evidence="1">APRT</shortName>
        <ecNumber evidence="1">2.4.2.7</ecNumber>
    </recommendedName>
</protein>
<gene>
    <name evidence="1" type="primary">apt</name>
    <name type="ordered locus">LJ_1474</name>
</gene>
<evidence type="ECO:0000255" key="1">
    <source>
        <dbReference type="HAMAP-Rule" id="MF_00004"/>
    </source>
</evidence>
<reference key="1">
    <citation type="journal article" date="2004" name="Proc. Natl. Acad. Sci. U.S.A.">
        <title>The genome sequence of the probiotic intestinal bacterium Lactobacillus johnsonii NCC 533.</title>
        <authorList>
            <person name="Pridmore R.D."/>
            <person name="Berger B."/>
            <person name="Desiere F."/>
            <person name="Vilanova D."/>
            <person name="Barretto C."/>
            <person name="Pittet A.-C."/>
            <person name="Zwahlen M.-C."/>
            <person name="Rouvet M."/>
            <person name="Altermann E."/>
            <person name="Barrangou R."/>
            <person name="Mollet B."/>
            <person name="Mercenier A."/>
            <person name="Klaenhammer T."/>
            <person name="Arigoni F."/>
            <person name="Schell M.A."/>
        </authorList>
    </citation>
    <scope>NUCLEOTIDE SEQUENCE [LARGE SCALE GENOMIC DNA]</scope>
    <source>
        <strain>CNCM I-1225 / La1 / NCC 533</strain>
    </source>
</reference>
<comment type="function">
    <text evidence="1">Catalyzes a salvage reaction resulting in the formation of AMP, that is energically less costly than de novo synthesis.</text>
</comment>
<comment type="catalytic activity">
    <reaction evidence="1">
        <text>AMP + diphosphate = 5-phospho-alpha-D-ribose 1-diphosphate + adenine</text>
        <dbReference type="Rhea" id="RHEA:16609"/>
        <dbReference type="ChEBI" id="CHEBI:16708"/>
        <dbReference type="ChEBI" id="CHEBI:33019"/>
        <dbReference type="ChEBI" id="CHEBI:58017"/>
        <dbReference type="ChEBI" id="CHEBI:456215"/>
        <dbReference type="EC" id="2.4.2.7"/>
    </reaction>
</comment>
<comment type="pathway">
    <text evidence="1">Purine metabolism; AMP biosynthesis via salvage pathway; AMP from adenine: step 1/1.</text>
</comment>
<comment type="subunit">
    <text evidence="1">Homodimer.</text>
</comment>
<comment type="subcellular location">
    <subcellularLocation>
        <location evidence="1">Cytoplasm</location>
    </subcellularLocation>
</comment>
<comment type="similarity">
    <text evidence="1">Belongs to the purine/pyrimidine phosphoribosyltransferase family.</text>
</comment>
<proteinExistence type="inferred from homology"/>
<feature type="chain" id="PRO_0000149398" description="Adenine phosphoribosyltransferase">
    <location>
        <begin position="1"/>
        <end position="175"/>
    </location>
</feature>
<name>APT_LACJO</name>
<keyword id="KW-0963">Cytoplasm</keyword>
<keyword id="KW-0328">Glycosyltransferase</keyword>
<keyword id="KW-0660">Purine salvage</keyword>
<keyword id="KW-0808">Transferase</keyword>
<accession>Q74IU0</accession>